<accession>P0CQ23</accession>
<accession>Q55VJ3</accession>
<accession>Q5KKP5</accession>
<name>SPT16_CRYNB</name>
<protein>
    <recommendedName>
        <fullName>FACT complex subunit SPT16</fullName>
    </recommendedName>
    <alternativeName>
        <fullName>Facilitates chromatin transcription complex subunit SPT16</fullName>
    </alternativeName>
</protein>
<sequence>MSDIRLDSATFFKRAAKIFDSWEKPSGDTQALEDINSIAIILGDPNDEVASYTKTTALQLWLLGYEFPSTLMVFEKSPRKVTFVCGSSKAKLIRQLQPSDGIEIDVKVRSKDATAAKETMEEVVASLNGKFGSLPKDRPIGKLVDEWNSAVESKSDLEVVDVAIPISAVLAEKDGEELKTIITSAKLTSTVMINYFKSKMESIIDRGTKMSHEALAQLVEEKIGNEEKGPDMKLWNKNPSLGEIDFASSEFVYSPVIQSGGKYDLKVTAASNNDNLKPGIILANMGIRYKNYCSNMGRTFLISPSKKQETQYTTLLEVRKEALALLKTGAVASDVYNSVHQSLETKNATLADSFLKNLGFATGMEYRDSSFLLNAKNNRELKENMVLVLTIGVADLPDAKNKGKTYSLLLSDTVKIGQNGAVVLTEGCTRLSDVVMDMEEEEEEDVKPQIDKKPKINNSPKKPRSSTVGGRVLNAKTRGANREQATQTTAEKIKTNQQRLHAQLNADGVKRWEADAGGKNGAQQKVVKRYESYRREEQLPRAVEDRRIYVDEQRQSVVLPINGYAVPYHISTIKNVTKTEESNHMVLRINFQSPGQIAGKKEDMPFEDPDANFIRSVSFRSQDQRHMLKVYEAITALKKAAVKRETERKELADVIEQEKLIEVKGRHPYVLKNVFPRPGPEGKKTDGNVEIHQNGIRFRPDGPASKIDILFSNIKHLFFQPSEKELIVIIHVHLKAPIMLGKKKTSDVQFYREVADMSFDETGGKKRRARYGDEDEIEQEQEDRKRRAELDKLFHDFARRIETAAQAQQFELEVDVPFRELGFNGVPHKSIVALLPTTNCLIHISELPFTVITLSEVEIVHLERVQFGLKNFDMVFVLQDLKKPPVHINSIPVAHLDNVKEWLDSCDVPISEGPVNLSWPAIMKTVNEDPHAFYAEGGWNFLTGSGSDDGSEESEEGSEFEGDSDVFDESSGSDEDSESAFEGDSDSASAESLSDEGEDWDELERKAKRADEKHRTDRGGDSDDDGKKKKKGSRR</sequence>
<gene>
    <name type="primary">SPT16</name>
    <name type="ordered locus">CNBC4930</name>
</gene>
<reference key="1">
    <citation type="journal article" date="2005" name="Science">
        <title>The genome of the basidiomycetous yeast and human pathogen Cryptococcus neoformans.</title>
        <authorList>
            <person name="Loftus B.J."/>
            <person name="Fung E."/>
            <person name="Roncaglia P."/>
            <person name="Rowley D."/>
            <person name="Amedeo P."/>
            <person name="Bruno D."/>
            <person name="Vamathevan J."/>
            <person name="Miranda M."/>
            <person name="Anderson I.J."/>
            <person name="Fraser J.A."/>
            <person name="Allen J.E."/>
            <person name="Bosdet I.E."/>
            <person name="Brent M.R."/>
            <person name="Chiu R."/>
            <person name="Doering T.L."/>
            <person name="Donlin M.J."/>
            <person name="D'Souza C.A."/>
            <person name="Fox D.S."/>
            <person name="Grinberg V."/>
            <person name="Fu J."/>
            <person name="Fukushima M."/>
            <person name="Haas B.J."/>
            <person name="Huang J.C."/>
            <person name="Janbon G."/>
            <person name="Jones S.J.M."/>
            <person name="Koo H.L."/>
            <person name="Krzywinski M.I."/>
            <person name="Kwon-Chung K.J."/>
            <person name="Lengeler K.B."/>
            <person name="Maiti R."/>
            <person name="Marra M.A."/>
            <person name="Marra R.E."/>
            <person name="Mathewson C.A."/>
            <person name="Mitchell T.G."/>
            <person name="Pertea M."/>
            <person name="Riggs F.R."/>
            <person name="Salzberg S.L."/>
            <person name="Schein J.E."/>
            <person name="Shvartsbeyn A."/>
            <person name="Shin H."/>
            <person name="Shumway M."/>
            <person name="Specht C.A."/>
            <person name="Suh B.B."/>
            <person name="Tenney A."/>
            <person name="Utterback T.R."/>
            <person name="Wickes B.L."/>
            <person name="Wortman J.R."/>
            <person name="Wye N.H."/>
            <person name="Kronstad J.W."/>
            <person name="Lodge J.K."/>
            <person name="Heitman J."/>
            <person name="Davis R.W."/>
            <person name="Fraser C.M."/>
            <person name="Hyman R.W."/>
        </authorList>
    </citation>
    <scope>NUCLEOTIDE SEQUENCE [LARGE SCALE GENOMIC DNA]</scope>
    <source>
        <strain>B-3501A</strain>
    </source>
</reference>
<dbReference type="EMBL" id="AAEY01000015">
    <property type="protein sequence ID" value="EAL21791.1"/>
    <property type="molecule type" value="Genomic_DNA"/>
</dbReference>
<dbReference type="RefSeq" id="XP_776438.1">
    <property type="nucleotide sequence ID" value="XM_771345.1"/>
</dbReference>
<dbReference type="SMR" id="P0CQ23"/>
<dbReference type="GeneID" id="4935158"/>
<dbReference type="KEGG" id="cnb:CNBC4930"/>
<dbReference type="VEuPathDB" id="FungiDB:CNBC4930"/>
<dbReference type="HOGENOM" id="CLU_004627_1_0_1"/>
<dbReference type="OrthoDB" id="5087at5206"/>
<dbReference type="GO" id="GO:0035101">
    <property type="term" value="C:FACT complex"/>
    <property type="evidence" value="ECO:0007669"/>
    <property type="project" value="EnsemblFungi"/>
</dbReference>
<dbReference type="GO" id="GO:0042393">
    <property type="term" value="F:histone binding"/>
    <property type="evidence" value="ECO:0007669"/>
    <property type="project" value="EnsemblFungi"/>
</dbReference>
<dbReference type="GO" id="GO:0140713">
    <property type="term" value="F:histone chaperone activity"/>
    <property type="evidence" value="ECO:0007669"/>
    <property type="project" value="EnsemblFungi"/>
</dbReference>
<dbReference type="GO" id="GO:0031491">
    <property type="term" value="F:nucleosome binding"/>
    <property type="evidence" value="ECO:0007669"/>
    <property type="project" value="EnsemblFungi"/>
</dbReference>
<dbReference type="GO" id="GO:0140719">
    <property type="term" value="P:constitutive heterochromatin formation"/>
    <property type="evidence" value="ECO:0007669"/>
    <property type="project" value="EnsemblFungi"/>
</dbReference>
<dbReference type="GO" id="GO:0006281">
    <property type="term" value="P:DNA repair"/>
    <property type="evidence" value="ECO:0007669"/>
    <property type="project" value="UniProtKB-KW"/>
</dbReference>
<dbReference type="GO" id="GO:0006261">
    <property type="term" value="P:DNA-templated DNA replication"/>
    <property type="evidence" value="ECO:0007669"/>
    <property type="project" value="EnsemblFungi"/>
</dbReference>
<dbReference type="GO" id="GO:0006334">
    <property type="term" value="P:nucleosome assembly"/>
    <property type="evidence" value="ECO:0007669"/>
    <property type="project" value="EnsemblFungi"/>
</dbReference>
<dbReference type="GO" id="GO:0045899">
    <property type="term" value="P:positive regulation of RNA polymerase II transcription preinitiation complex assembly"/>
    <property type="evidence" value="ECO:0007669"/>
    <property type="project" value="EnsemblFungi"/>
</dbReference>
<dbReference type="GO" id="GO:0007063">
    <property type="term" value="P:regulation of sister chromatid cohesion"/>
    <property type="evidence" value="ECO:0007669"/>
    <property type="project" value="EnsemblFungi"/>
</dbReference>
<dbReference type="GO" id="GO:0006368">
    <property type="term" value="P:transcription elongation by RNA polymerase II"/>
    <property type="evidence" value="ECO:0007669"/>
    <property type="project" value="TreeGrafter"/>
</dbReference>
<dbReference type="FunFam" id="2.30.29.30:FF:000017">
    <property type="entry name" value="FACT complex subunit SPT16"/>
    <property type="match status" value="1"/>
</dbReference>
<dbReference type="FunFam" id="3.40.350.10:FF:000006">
    <property type="entry name" value="FACT complex subunit SPT16"/>
    <property type="match status" value="1"/>
</dbReference>
<dbReference type="FunFam" id="2.30.29.210:FF:000001">
    <property type="entry name" value="FACT complex subunit spt16"/>
    <property type="match status" value="1"/>
</dbReference>
<dbReference type="FunFam" id="3.90.230.10:FF:000005">
    <property type="entry name" value="FACT complex subunit spt16"/>
    <property type="match status" value="1"/>
</dbReference>
<dbReference type="Gene3D" id="2.30.29.150">
    <property type="match status" value="1"/>
</dbReference>
<dbReference type="Gene3D" id="3.90.230.10">
    <property type="entry name" value="Creatinase/methionine aminopeptidase superfamily"/>
    <property type="match status" value="1"/>
</dbReference>
<dbReference type="Gene3D" id="3.40.350.10">
    <property type="entry name" value="Creatinase/prolidase N-terminal domain"/>
    <property type="match status" value="1"/>
</dbReference>
<dbReference type="Gene3D" id="2.30.29.210">
    <property type="entry name" value="FACT complex subunit Spt16p/Cdc68p"/>
    <property type="match status" value="1"/>
</dbReference>
<dbReference type="Gene3D" id="2.30.29.30">
    <property type="entry name" value="Pleckstrin-homology domain (PH domain)/Phosphotyrosine-binding domain (PTB)"/>
    <property type="match status" value="1"/>
</dbReference>
<dbReference type="InterPro" id="IPR029149">
    <property type="entry name" value="Creatin/AminoP/Spt16_N"/>
</dbReference>
<dbReference type="InterPro" id="IPR036005">
    <property type="entry name" value="Creatinase/aminopeptidase-like"/>
</dbReference>
<dbReference type="InterPro" id="IPR029148">
    <property type="entry name" value="FACT-SPT16_Nlobe"/>
</dbReference>
<dbReference type="InterPro" id="IPR056595">
    <property type="entry name" value="Fact-SPT16_PH"/>
</dbReference>
<dbReference type="InterPro" id="IPR048969">
    <property type="entry name" value="FACT_SPT16_C"/>
</dbReference>
<dbReference type="InterPro" id="IPR013953">
    <property type="entry name" value="FACT_SPT16_M"/>
</dbReference>
<dbReference type="InterPro" id="IPR000994">
    <property type="entry name" value="Pept_M24"/>
</dbReference>
<dbReference type="InterPro" id="IPR011993">
    <property type="entry name" value="PH-like_dom_sf"/>
</dbReference>
<dbReference type="InterPro" id="IPR013719">
    <property type="entry name" value="RTT106/SPT16-like_middle_dom"/>
</dbReference>
<dbReference type="InterPro" id="IPR040258">
    <property type="entry name" value="Spt16"/>
</dbReference>
<dbReference type="PANTHER" id="PTHR13980">
    <property type="entry name" value="CDC68 RELATED"/>
    <property type="match status" value="1"/>
</dbReference>
<dbReference type="PANTHER" id="PTHR13980:SF15">
    <property type="entry name" value="FACT COMPLEX SUBUNIT SPT16"/>
    <property type="match status" value="1"/>
</dbReference>
<dbReference type="Pfam" id="PF14826">
    <property type="entry name" value="FACT-Spt16_Nlob"/>
    <property type="match status" value="1"/>
</dbReference>
<dbReference type="Pfam" id="PF00557">
    <property type="entry name" value="Peptidase_M24"/>
    <property type="match status" value="1"/>
</dbReference>
<dbReference type="Pfam" id="PF24824">
    <property type="entry name" value="PH_SPT16"/>
    <property type="match status" value="1"/>
</dbReference>
<dbReference type="Pfam" id="PF08512">
    <property type="entry name" value="Rttp106-like_middle"/>
    <property type="match status" value="1"/>
</dbReference>
<dbReference type="Pfam" id="PF08644">
    <property type="entry name" value="SPT16"/>
    <property type="match status" value="1"/>
</dbReference>
<dbReference type="Pfam" id="PF21091">
    <property type="entry name" value="SPT16_C"/>
    <property type="match status" value="1"/>
</dbReference>
<dbReference type="SMART" id="SM01285">
    <property type="entry name" value="FACT-Spt16_Nlob"/>
    <property type="match status" value="1"/>
</dbReference>
<dbReference type="SMART" id="SM01287">
    <property type="entry name" value="Rtt106"/>
    <property type="match status" value="1"/>
</dbReference>
<dbReference type="SMART" id="SM01286">
    <property type="entry name" value="SPT16"/>
    <property type="match status" value="1"/>
</dbReference>
<dbReference type="SUPFAM" id="SSF55920">
    <property type="entry name" value="Creatinase/aminopeptidase"/>
    <property type="match status" value="1"/>
</dbReference>
<evidence type="ECO:0000250" key="1"/>
<evidence type="ECO:0000255" key="2"/>
<evidence type="ECO:0000256" key="3">
    <source>
        <dbReference type="SAM" id="MobiDB-lite"/>
    </source>
</evidence>
<evidence type="ECO:0000305" key="4"/>
<comment type="function">
    <text evidence="1">Component of the FACT complex, a general chromatin factor that acts to reorganize nucleosomes. The FACT complex is involved in multiple processes that require DNA as a template such as mRNA elongation, DNA replication and DNA repair. During transcription elongation the FACT complex acts as a histone chaperone that both destabilizes and restores nucleosomal structure. It facilitates the passage of RNA polymerase II and transcription by promoting the dissociation of one histone H2A-H2B dimer from the nucleosome, then subsequently promotes the reestablishment of the nucleosome following the passage of RNA polymerase II (By similarity).</text>
</comment>
<comment type="subunit">
    <text evidence="1">Forms a stable heterodimer with POB3. The SPT16-POB3 dimer weakly associates with multiple molecules of NHP6 to form the FACT complex (By similarity).</text>
</comment>
<comment type="subcellular location">
    <subcellularLocation>
        <location evidence="1">Nucleus</location>
    </subcellularLocation>
    <subcellularLocation>
        <location evidence="1">Chromosome</location>
    </subcellularLocation>
</comment>
<comment type="similarity">
    <text evidence="4">Belongs to the peptidase M24 family. SPT16 subfamily.</text>
</comment>
<comment type="caution">
    <text evidence="4">Although related to the peptidase M24 family, this protein lacks conserved active site residues suggesting that it may lack peptidase activity.</text>
</comment>
<feature type="chain" id="PRO_0000410221" description="FACT complex subunit SPT16">
    <location>
        <begin position="1"/>
        <end position="1035"/>
    </location>
</feature>
<feature type="region of interest" description="Disordered" evidence="3">
    <location>
        <begin position="440"/>
        <end position="471"/>
    </location>
</feature>
<feature type="region of interest" description="Disordered" evidence="3">
    <location>
        <begin position="944"/>
        <end position="1035"/>
    </location>
</feature>
<feature type="coiled-coil region" evidence="2">
    <location>
        <begin position="637"/>
        <end position="657"/>
    </location>
</feature>
<feature type="compositionally biased region" description="Acidic residues" evidence="3">
    <location>
        <begin position="949"/>
        <end position="985"/>
    </location>
</feature>
<feature type="compositionally biased region" description="Acidic residues" evidence="3">
    <location>
        <begin position="993"/>
        <end position="1002"/>
    </location>
</feature>
<feature type="compositionally biased region" description="Basic and acidic residues" evidence="3">
    <location>
        <begin position="1003"/>
        <end position="1027"/>
    </location>
</feature>
<keyword id="KW-0158">Chromosome</keyword>
<keyword id="KW-0175">Coiled coil</keyword>
<keyword id="KW-0227">DNA damage</keyword>
<keyword id="KW-0234">DNA repair</keyword>
<keyword id="KW-0235">DNA replication</keyword>
<keyword id="KW-0539">Nucleus</keyword>
<keyword id="KW-0804">Transcription</keyword>
<keyword id="KW-0805">Transcription regulation</keyword>
<organism>
    <name type="scientific">Cryptococcus neoformans var. neoformans serotype D (strain B-3501A)</name>
    <name type="common">Filobasidiella neoformans</name>
    <dbReference type="NCBI Taxonomy" id="283643"/>
    <lineage>
        <taxon>Eukaryota</taxon>
        <taxon>Fungi</taxon>
        <taxon>Dikarya</taxon>
        <taxon>Basidiomycota</taxon>
        <taxon>Agaricomycotina</taxon>
        <taxon>Tremellomycetes</taxon>
        <taxon>Tremellales</taxon>
        <taxon>Cryptococcaceae</taxon>
        <taxon>Cryptococcus</taxon>
        <taxon>Cryptococcus neoformans species complex</taxon>
    </lineage>
</organism>
<proteinExistence type="inferred from homology"/>